<keyword id="KW-0997">Cell inner membrane</keyword>
<keyword id="KW-1003">Cell membrane</keyword>
<keyword id="KW-0342">GTP-binding</keyword>
<keyword id="KW-0378">Hydrolase</keyword>
<keyword id="KW-0472">Membrane</keyword>
<keyword id="KW-0547">Nucleotide-binding</keyword>
<keyword id="KW-0648">Protein biosynthesis</keyword>
<keyword id="KW-1185">Reference proteome</keyword>
<evidence type="ECO:0000255" key="1">
    <source>
        <dbReference type="HAMAP-Rule" id="MF_00071"/>
    </source>
</evidence>
<sequence>MKNIRNFSIIAHIDHGKSTLSDRIIQICGGLSDREMEAQVLDSMDLERERGITIKAQSVTLDYKASDGETYQLNFIDTPGHVDFSYEVSRSLAACEGALLVVDAGQGVEAQTLANCYTAMEMDLEVVPVLNKIDLPAADPERVAEEIEDIVGIDATDAVRCSAKTGVGVQDVLERLVRDIPPPEGDPEGPLQALIIDSWFDNYLGVVSLIRIKNGTLRKGDKVKVMSTGQTYNADRLGIFTPKQVDRTELKCGEVGWLVCAIKDIHGAPVGDTLTLARNPAEKALPGFKKVKPQVYAGLFPVSSDDYEAFRDALGKLSLNDASLFYEPESSSALGFGFRCGFLGLLHMEIIQERLEREYDLDLITTAPTVVYEVETTSREVIYVDSPSKLPAVNNIYELREPIAECHMLLPQAYLGNVITLCVEKRGVQTNMVYHGNQVALTYEIPMAEVVLDFFDRLKSTSRGYASLDYNFKRFQASDMVRVDVLINGERVDALALITHRDNSQNRGRELVEKMKDLIPRQQFDIAIQAAIGTHIIARSTVKQLRKNVLAKCYGGDISRKKKLLQKQKEGKKRMKQIGNVELPQEAFLAILHVGKDNK</sequence>
<gene>
    <name evidence="1" type="primary">lepA</name>
    <name type="ordered locus">SF2631</name>
    <name type="ordered locus">S2804</name>
</gene>
<name>LEPA_SHIFL</name>
<dbReference type="EC" id="3.6.5.n1" evidence="1"/>
<dbReference type="EMBL" id="AE005674">
    <property type="protein sequence ID" value="AAN44128.1"/>
    <property type="molecule type" value="Genomic_DNA"/>
</dbReference>
<dbReference type="EMBL" id="AE014073">
    <property type="protein sequence ID" value="AAP17952.1"/>
    <property type="molecule type" value="Genomic_DNA"/>
</dbReference>
<dbReference type="RefSeq" id="NP_708421.1">
    <property type="nucleotide sequence ID" value="NC_004337.2"/>
</dbReference>
<dbReference type="RefSeq" id="WP_000790168.1">
    <property type="nucleotide sequence ID" value="NZ_WPGW01000044.1"/>
</dbReference>
<dbReference type="SMR" id="P60788"/>
<dbReference type="STRING" id="198214.SF2631"/>
<dbReference type="PaxDb" id="198214-SF2631"/>
<dbReference type="GeneID" id="1026783"/>
<dbReference type="GeneID" id="93774522"/>
<dbReference type="KEGG" id="sfl:SF2631"/>
<dbReference type="KEGG" id="sfx:S2804"/>
<dbReference type="PATRIC" id="fig|198214.7.peg.3139"/>
<dbReference type="HOGENOM" id="CLU_009995_3_3_6"/>
<dbReference type="Proteomes" id="UP000001006">
    <property type="component" value="Chromosome"/>
</dbReference>
<dbReference type="Proteomes" id="UP000002673">
    <property type="component" value="Chromosome"/>
</dbReference>
<dbReference type="GO" id="GO:0005886">
    <property type="term" value="C:plasma membrane"/>
    <property type="evidence" value="ECO:0007669"/>
    <property type="project" value="UniProtKB-SubCell"/>
</dbReference>
<dbReference type="GO" id="GO:0005525">
    <property type="term" value="F:GTP binding"/>
    <property type="evidence" value="ECO:0007669"/>
    <property type="project" value="UniProtKB-UniRule"/>
</dbReference>
<dbReference type="GO" id="GO:0003924">
    <property type="term" value="F:GTPase activity"/>
    <property type="evidence" value="ECO:0007669"/>
    <property type="project" value="UniProtKB-UniRule"/>
</dbReference>
<dbReference type="GO" id="GO:0097216">
    <property type="term" value="F:guanosine tetraphosphate binding"/>
    <property type="evidence" value="ECO:0007669"/>
    <property type="project" value="UniProtKB-ARBA"/>
</dbReference>
<dbReference type="GO" id="GO:0043022">
    <property type="term" value="F:ribosome binding"/>
    <property type="evidence" value="ECO:0007669"/>
    <property type="project" value="UniProtKB-UniRule"/>
</dbReference>
<dbReference type="GO" id="GO:0003746">
    <property type="term" value="F:translation elongation factor activity"/>
    <property type="evidence" value="ECO:0007669"/>
    <property type="project" value="UniProtKB-UniRule"/>
</dbReference>
<dbReference type="GO" id="GO:0045727">
    <property type="term" value="P:positive regulation of translation"/>
    <property type="evidence" value="ECO:0007669"/>
    <property type="project" value="UniProtKB-UniRule"/>
</dbReference>
<dbReference type="CDD" id="cd03699">
    <property type="entry name" value="EF4_II"/>
    <property type="match status" value="1"/>
</dbReference>
<dbReference type="CDD" id="cd16260">
    <property type="entry name" value="EF4_III"/>
    <property type="match status" value="1"/>
</dbReference>
<dbReference type="CDD" id="cd01890">
    <property type="entry name" value="LepA"/>
    <property type="match status" value="1"/>
</dbReference>
<dbReference type="CDD" id="cd03709">
    <property type="entry name" value="lepA_C"/>
    <property type="match status" value="1"/>
</dbReference>
<dbReference type="FunFam" id="3.30.70.240:FF:000005">
    <property type="entry name" value="Elongation factor 4"/>
    <property type="match status" value="1"/>
</dbReference>
<dbReference type="FunFam" id="3.40.50.300:FF:000078">
    <property type="entry name" value="Elongation factor 4"/>
    <property type="match status" value="1"/>
</dbReference>
<dbReference type="FunFam" id="2.40.30.10:FF:000015">
    <property type="entry name" value="Translation factor GUF1, mitochondrial"/>
    <property type="match status" value="1"/>
</dbReference>
<dbReference type="FunFam" id="3.30.70.2570:FF:000001">
    <property type="entry name" value="Translation factor GUF1, mitochondrial"/>
    <property type="match status" value="1"/>
</dbReference>
<dbReference type="FunFam" id="3.30.70.870:FF:000004">
    <property type="entry name" value="Translation factor GUF1, mitochondrial"/>
    <property type="match status" value="1"/>
</dbReference>
<dbReference type="Gene3D" id="3.30.70.240">
    <property type="match status" value="1"/>
</dbReference>
<dbReference type="Gene3D" id="3.30.70.2570">
    <property type="entry name" value="Elongation factor 4, C-terminal domain"/>
    <property type="match status" value="1"/>
</dbReference>
<dbReference type="Gene3D" id="3.30.70.870">
    <property type="entry name" value="Elongation Factor G (Translational Gtpase), domain 3"/>
    <property type="match status" value="1"/>
</dbReference>
<dbReference type="Gene3D" id="3.40.50.300">
    <property type="entry name" value="P-loop containing nucleotide triphosphate hydrolases"/>
    <property type="match status" value="1"/>
</dbReference>
<dbReference type="Gene3D" id="2.40.30.10">
    <property type="entry name" value="Translation factors"/>
    <property type="match status" value="1"/>
</dbReference>
<dbReference type="HAMAP" id="MF_00071">
    <property type="entry name" value="LepA"/>
    <property type="match status" value="1"/>
</dbReference>
<dbReference type="InterPro" id="IPR006297">
    <property type="entry name" value="EF-4"/>
</dbReference>
<dbReference type="InterPro" id="IPR035647">
    <property type="entry name" value="EFG_III/V"/>
</dbReference>
<dbReference type="InterPro" id="IPR000640">
    <property type="entry name" value="EFG_V-like"/>
</dbReference>
<dbReference type="InterPro" id="IPR004161">
    <property type="entry name" value="EFTu-like_2"/>
</dbReference>
<dbReference type="InterPro" id="IPR031157">
    <property type="entry name" value="G_TR_CS"/>
</dbReference>
<dbReference type="InterPro" id="IPR038363">
    <property type="entry name" value="LepA_C_sf"/>
</dbReference>
<dbReference type="InterPro" id="IPR013842">
    <property type="entry name" value="LepA_CTD"/>
</dbReference>
<dbReference type="InterPro" id="IPR035654">
    <property type="entry name" value="LepA_IV"/>
</dbReference>
<dbReference type="InterPro" id="IPR027417">
    <property type="entry name" value="P-loop_NTPase"/>
</dbReference>
<dbReference type="InterPro" id="IPR005225">
    <property type="entry name" value="Small_GTP-bd"/>
</dbReference>
<dbReference type="InterPro" id="IPR000795">
    <property type="entry name" value="T_Tr_GTP-bd_dom"/>
</dbReference>
<dbReference type="NCBIfam" id="TIGR01393">
    <property type="entry name" value="lepA"/>
    <property type="match status" value="1"/>
</dbReference>
<dbReference type="NCBIfam" id="TIGR00231">
    <property type="entry name" value="small_GTP"/>
    <property type="match status" value="1"/>
</dbReference>
<dbReference type="PANTHER" id="PTHR43512:SF4">
    <property type="entry name" value="TRANSLATION FACTOR GUF1 HOMOLOG, CHLOROPLASTIC"/>
    <property type="match status" value="1"/>
</dbReference>
<dbReference type="PANTHER" id="PTHR43512">
    <property type="entry name" value="TRANSLATION FACTOR GUF1-RELATED"/>
    <property type="match status" value="1"/>
</dbReference>
<dbReference type="Pfam" id="PF00679">
    <property type="entry name" value="EFG_C"/>
    <property type="match status" value="1"/>
</dbReference>
<dbReference type="Pfam" id="PF00009">
    <property type="entry name" value="GTP_EFTU"/>
    <property type="match status" value="1"/>
</dbReference>
<dbReference type="Pfam" id="PF03144">
    <property type="entry name" value="GTP_EFTU_D2"/>
    <property type="match status" value="1"/>
</dbReference>
<dbReference type="Pfam" id="PF06421">
    <property type="entry name" value="LepA_C"/>
    <property type="match status" value="1"/>
</dbReference>
<dbReference type="PRINTS" id="PR00315">
    <property type="entry name" value="ELONGATNFCT"/>
</dbReference>
<dbReference type="SUPFAM" id="SSF54980">
    <property type="entry name" value="EF-G C-terminal domain-like"/>
    <property type="match status" value="2"/>
</dbReference>
<dbReference type="SUPFAM" id="SSF52540">
    <property type="entry name" value="P-loop containing nucleoside triphosphate hydrolases"/>
    <property type="match status" value="1"/>
</dbReference>
<dbReference type="PROSITE" id="PS00301">
    <property type="entry name" value="G_TR_1"/>
    <property type="match status" value="1"/>
</dbReference>
<dbReference type="PROSITE" id="PS51722">
    <property type="entry name" value="G_TR_2"/>
    <property type="match status" value="1"/>
</dbReference>
<reference key="1">
    <citation type="journal article" date="2002" name="Nucleic Acids Res.">
        <title>Genome sequence of Shigella flexneri 2a: insights into pathogenicity through comparison with genomes of Escherichia coli K12 and O157.</title>
        <authorList>
            <person name="Jin Q."/>
            <person name="Yuan Z."/>
            <person name="Xu J."/>
            <person name="Wang Y."/>
            <person name="Shen Y."/>
            <person name="Lu W."/>
            <person name="Wang J."/>
            <person name="Liu H."/>
            <person name="Yang J."/>
            <person name="Yang F."/>
            <person name="Zhang X."/>
            <person name="Zhang J."/>
            <person name="Yang G."/>
            <person name="Wu H."/>
            <person name="Qu D."/>
            <person name="Dong J."/>
            <person name="Sun L."/>
            <person name="Xue Y."/>
            <person name="Zhao A."/>
            <person name="Gao Y."/>
            <person name="Zhu J."/>
            <person name="Kan B."/>
            <person name="Ding K."/>
            <person name="Chen S."/>
            <person name="Cheng H."/>
            <person name="Yao Z."/>
            <person name="He B."/>
            <person name="Chen R."/>
            <person name="Ma D."/>
            <person name="Qiang B."/>
            <person name="Wen Y."/>
            <person name="Hou Y."/>
            <person name="Yu J."/>
        </authorList>
    </citation>
    <scope>NUCLEOTIDE SEQUENCE [LARGE SCALE GENOMIC DNA]</scope>
    <source>
        <strain>301 / Serotype 2a</strain>
    </source>
</reference>
<reference key="2">
    <citation type="journal article" date="2003" name="Infect. Immun.">
        <title>Complete genome sequence and comparative genomics of Shigella flexneri serotype 2a strain 2457T.</title>
        <authorList>
            <person name="Wei J."/>
            <person name="Goldberg M.B."/>
            <person name="Burland V."/>
            <person name="Venkatesan M.M."/>
            <person name="Deng W."/>
            <person name="Fournier G."/>
            <person name="Mayhew G.F."/>
            <person name="Plunkett G. III"/>
            <person name="Rose D.J."/>
            <person name="Darling A."/>
            <person name="Mau B."/>
            <person name="Perna N.T."/>
            <person name="Payne S.M."/>
            <person name="Runyen-Janecky L.J."/>
            <person name="Zhou S."/>
            <person name="Schwartz D.C."/>
            <person name="Blattner F.R."/>
        </authorList>
    </citation>
    <scope>NUCLEOTIDE SEQUENCE [LARGE SCALE GENOMIC DNA]</scope>
    <source>
        <strain>ATCC 700930 / 2457T / Serotype 2a</strain>
    </source>
</reference>
<organism>
    <name type="scientific">Shigella flexneri</name>
    <dbReference type="NCBI Taxonomy" id="623"/>
    <lineage>
        <taxon>Bacteria</taxon>
        <taxon>Pseudomonadati</taxon>
        <taxon>Pseudomonadota</taxon>
        <taxon>Gammaproteobacteria</taxon>
        <taxon>Enterobacterales</taxon>
        <taxon>Enterobacteriaceae</taxon>
        <taxon>Shigella</taxon>
    </lineage>
</organism>
<protein>
    <recommendedName>
        <fullName evidence="1">Elongation factor 4</fullName>
        <shortName evidence="1">EF-4</shortName>
        <ecNumber evidence="1">3.6.5.n1</ecNumber>
    </recommendedName>
    <alternativeName>
        <fullName evidence="1">Ribosomal back-translocase LepA</fullName>
    </alternativeName>
</protein>
<accession>P60788</accession>
<accession>P07682</accession>
<accession>P76590</accession>
<feature type="chain" id="PRO_0000176339" description="Elongation factor 4">
    <location>
        <begin position="1"/>
        <end position="599"/>
    </location>
</feature>
<feature type="domain" description="tr-type G">
    <location>
        <begin position="2"/>
        <end position="184"/>
    </location>
</feature>
<feature type="binding site" evidence="1">
    <location>
        <begin position="14"/>
        <end position="19"/>
    </location>
    <ligand>
        <name>GTP</name>
        <dbReference type="ChEBI" id="CHEBI:37565"/>
    </ligand>
</feature>
<feature type="binding site" evidence="1">
    <location>
        <begin position="131"/>
        <end position="134"/>
    </location>
    <ligand>
        <name>GTP</name>
        <dbReference type="ChEBI" id="CHEBI:37565"/>
    </ligand>
</feature>
<proteinExistence type="inferred from homology"/>
<comment type="function">
    <text evidence="1">Required for accurate and efficient protein synthesis under certain stress conditions. May act as a fidelity factor of the translation reaction, by catalyzing a one-codon backward translocation of tRNAs on improperly translocated ribosomes. Back-translocation proceeds from a post-translocation (POST) complex to a pre-translocation (PRE) complex, thus giving elongation factor G a second chance to translocate the tRNAs correctly. Binds to ribosomes in a GTP-dependent manner.</text>
</comment>
<comment type="catalytic activity">
    <reaction evidence="1">
        <text>GTP + H2O = GDP + phosphate + H(+)</text>
        <dbReference type="Rhea" id="RHEA:19669"/>
        <dbReference type="ChEBI" id="CHEBI:15377"/>
        <dbReference type="ChEBI" id="CHEBI:15378"/>
        <dbReference type="ChEBI" id="CHEBI:37565"/>
        <dbReference type="ChEBI" id="CHEBI:43474"/>
        <dbReference type="ChEBI" id="CHEBI:58189"/>
        <dbReference type="EC" id="3.6.5.n1"/>
    </reaction>
</comment>
<comment type="subcellular location">
    <subcellularLocation>
        <location evidence="1">Cell inner membrane</location>
        <topology evidence="1">Peripheral membrane protein</topology>
        <orientation evidence="1">Cytoplasmic side</orientation>
    </subcellularLocation>
</comment>
<comment type="similarity">
    <text evidence="1">Belongs to the TRAFAC class translation factor GTPase superfamily. Classic translation factor GTPase family. LepA subfamily.</text>
</comment>